<organism>
    <name type="scientific">Chlorokybus atmophyticus</name>
    <name type="common">Soil alga</name>
    <dbReference type="NCBI Taxonomy" id="3144"/>
    <lineage>
        <taxon>Eukaryota</taxon>
        <taxon>Viridiplantae</taxon>
        <taxon>Streptophyta</taxon>
        <taxon>Chlorokybophyceae</taxon>
        <taxon>Chlorokybales</taxon>
        <taxon>Chlorokybaceae</taxon>
        <taxon>Chlorokybus</taxon>
    </lineage>
</organism>
<geneLocation type="chloroplast"/>
<feature type="initiator methionine" description="Removed" evidence="1">
    <location>
        <position position="1"/>
    </location>
</feature>
<feature type="chain" id="PRO_0000292117" description="Photosystem I iron-sulfur center">
    <location>
        <begin position="2"/>
        <end position="81"/>
    </location>
</feature>
<feature type="domain" description="4Fe-4S ferredoxin-type 1" evidence="2">
    <location>
        <begin position="2"/>
        <end position="31"/>
    </location>
</feature>
<feature type="domain" description="4Fe-4S ferredoxin-type 2" evidence="2">
    <location>
        <begin position="39"/>
        <end position="68"/>
    </location>
</feature>
<feature type="binding site" evidence="2">
    <location>
        <position position="11"/>
    </location>
    <ligand>
        <name>[4Fe-4S] cluster</name>
        <dbReference type="ChEBI" id="CHEBI:49883"/>
        <label>1</label>
    </ligand>
</feature>
<feature type="binding site" evidence="2">
    <location>
        <position position="14"/>
    </location>
    <ligand>
        <name>[4Fe-4S] cluster</name>
        <dbReference type="ChEBI" id="CHEBI:49883"/>
        <label>1</label>
    </ligand>
</feature>
<feature type="binding site" evidence="2">
    <location>
        <position position="17"/>
    </location>
    <ligand>
        <name>[4Fe-4S] cluster</name>
        <dbReference type="ChEBI" id="CHEBI:49883"/>
        <label>1</label>
    </ligand>
</feature>
<feature type="binding site" evidence="2">
    <location>
        <position position="21"/>
    </location>
    <ligand>
        <name>[4Fe-4S] cluster</name>
        <dbReference type="ChEBI" id="CHEBI:49883"/>
        <label>2</label>
    </ligand>
</feature>
<feature type="binding site" evidence="2">
    <location>
        <position position="48"/>
    </location>
    <ligand>
        <name>[4Fe-4S] cluster</name>
        <dbReference type="ChEBI" id="CHEBI:49883"/>
        <label>2</label>
    </ligand>
</feature>
<feature type="binding site" evidence="2">
    <location>
        <position position="51"/>
    </location>
    <ligand>
        <name>[4Fe-4S] cluster</name>
        <dbReference type="ChEBI" id="CHEBI:49883"/>
        <label>2</label>
    </ligand>
</feature>
<feature type="binding site" evidence="2">
    <location>
        <position position="54"/>
    </location>
    <ligand>
        <name>[4Fe-4S] cluster</name>
        <dbReference type="ChEBI" id="CHEBI:49883"/>
        <label>2</label>
    </ligand>
</feature>
<feature type="binding site" evidence="2">
    <location>
        <position position="58"/>
    </location>
    <ligand>
        <name>[4Fe-4S] cluster</name>
        <dbReference type="ChEBI" id="CHEBI:49883"/>
        <label>1</label>
    </ligand>
</feature>
<dbReference type="EC" id="1.97.1.12" evidence="2"/>
<dbReference type="EMBL" id="DQ422812">
    <property type="protein sequence ID" value="ABD62207.1"/>
    <property type="molecule type" value="Genomic_DNA"/>
</dbReference>
<dbReference type="RefSeq" id="YP_001019157.1">
    <property type="nucleotide sequence ID" value="NC_008822.1"/>
</dbReference>
<dbReference type="SMR" id="Q19V62"/>
<dbReference type="GeneID" id="4783250"/>
<dbReference type="GO" id="GO:0009535">
    <property type="term" value="C:chloroplast thylakoid membrane"/>
    <property type="evidence" value="ECO:0007669"/>
    <property type="project" value="UniProtKB-SubCell"/>
</dbReference>
<dbReference type="GO" id="GO:0009522">
    <property type="term" value="C:photosystem I"/>
    <property type="evidence" value="ECO:0007669"/>
    <property type="project" value="UniProtKB-KW"/>
</dbReference>
<dbReference type="GO" id="GO:0051539">
    <property type="term" value="F:4 iron, 4 sulfur cluster binding"/>
    <property type="evidence" value="ECO:0007669"/>
    <property type="project" value="UniProtKB-KW"/>
</dbReference>
<dbReference type="GO" id="GO:0009055">
    <property type="term" value="F:electron transfer activity"/>
    <property type="evidence" value="ECO:0007669"/>
    <property type="project" value="UniProtKB-UniRule"/>
</dbReference>
<dbReference type="GO" id="GO:0046872">
    <property type="term" value="F:metal ion binding"/>
    <property type="evidence" value="ECO:0007669"/>
    <property type="project" value="UniProtKB-KW"/>
</dbReference>
<dbReference type="GO" id="GO:0016491">
    <property type="term" value="F:oxidoreductase activity"/>
    <property type="evidence" value="ECO:0007669"/>
    <property type="project" value="UniProtKB-KW"/>
</dbReference>
<dbReference type="GO" id="GO:0009773">
    <property type="term" value="P:photosynthetic electron transport in photosystem I"/>
    <property type="evidence" value="ECO:0007669"/>
    <property type="project" value="InterPro"/>
</dbReference>
<dbReference type="FunFam" id="3.30.70.20:FF:000001">
    <property type="entry name" value="Photosystem I iron-sulfur center"/>
    <property type="match status" value="1"/>
</dbReference>
<dbReference type="Gene3D" id="3.30.70.20">
    <property type="match status" value="1"/>
</dbReference>
<dbReference type="HAMAP" id="MF_01303">
    <property type="entry name" value="PSI_PsaC"/>
    <property type="match status" value="1"/>
</dbReference>
<dbReference type="InterPro" id="IPR017896">
    <property type="entry name" value="4Fe4S_Fe-S-bd"/>
</dbReference>
<dbReference type="InterPro" id="IPR017900">
    <property type="entry name" value="4Fe4S_Fe_S_CS"/>
</dbReference>
<dbReference type="InterPro" id="IPR050157">
    <property type="entry name" value="PSI_iron-sulfur_center"/>
</dbReference>
<dbReference type="InterPro" id="IPR017491">
    <property type="entry name" value="PSI_PsaC"/>
</dbReference>
<dbReference type="NCBIfam" id="TIGR03048">
    <property type="entry name" value="PS_I_psaC"/>
    <property type="match status" value="1"/>
</dbReference>
<dbReference type="PANTHER" id="PTHR24960:SF79">
    <property type="entry name" value="PHOTOSYSTEM I IRON-SULFUR CENTER"/>
    <property type="match status" value="1"/>
</dbReference>
<dbReference type="PANTHER" id="PTHR24960">
    <property type="entry name" value="PHOTOSYSTEM I IRON-SULFUR CENTER-RELATED"/>
    <property type="match status" value="1"/>
</dbReference>
<dbReference type="Pfam" id="PF12838">
    <property type="entry name" value="Fer4_7"/>
    <property type="match status" value="1"/>
</dbReference>
<dbReference type="SUPFAM" id="SSF54862">
    <property type="entry name" value="4Fe-4S ferredoxins"/>
    <property type="match status" value="1"/>
</dbReference>
<dbReference type="PROSITE" id="PS00198">
    <property type="entry name" value="4FE4S_FER_1"/>
    <property type="match status" value="2"/>
</dbReference>
<dbReference type="PROSITE" id="PS51379">
    <property type="entry name" value="4FE4S_FER_2"/>
    <property type="match status" value="2"/>
</dbReference>
<gene>
    <name evidence="2" type="primary">psaC</name>
</gene>
<accession>Q19V62</accession>
<name>PSAC_CHLAT</name>
<protein>
    <recommendedName>
        <fullName evidence="2">Photosystem I iron-sulfur center</fullName>
        <ecNumber evidence="2">1.97.1.12</ecNumber>
    </recommendedName>
    <alternativeName>
        <fullName evidence="2">9 kDa polypeptide</fullName>
    </alternativeName>
    <alternativeName>
        <fullName evidence="2">PSI-C</fullName>
    </alternativeName>
    <alternativeName>
        <fullName evidence="2">Photosystem I subunit VII</fullName>
    </alternativeName>
    <alternativeName>
        <fullName evidence="2">PsaC</fullName>
    </alternativeName>
</protein>
<keyword id="KW-0004">4Fe-4S</keyword>
<keyword id="KW-0150">Chloroplast</keyword>
<keyword id="KW-0249">Electron transport</keyword>
<keyword id="KW-0408">Iron</keyword>
<keyword id="KW-0411">Iron-sulfur</keyword>
<keyword id="KW-0472">Membrane</keyword>
<keyword id="KW-0479">Metal-binding</keyword>
<keyword id="KW-0560">Oxidoreductase</keyword>
<keyword id="KW-0602">Photosynthesis</keyword>
<keyword id="KW-0603">Photosystem I</keyword>
<keyword id="KW-0934">Plastid</keyword>
<keyword id="KW-0677">Repeat</keyword>
<keyword id="KW-0793">Thylakoid</keyword>
<keyword id="KW-0813">Transport</keyword>
<sequence length="81" mass="8827">MAHSVKIYDTCIGCTQCVRACPTDVLEMVPWDGCRANQIASAPRTEDCVGCKRCESACPTDFLSVRVYLGAETTRSMGLAY</sequence>
<comment type="function">
    <text evidence="2">Apoprotein for the two 4Fe-4S centers FA and FB of photosystem I (PSI); essential for photochemical activity. FB is the terminal electron acceptor of PSI, donating electrons to ferredoxin. The C-terminus interacts with PsaA/B/D and helps assemble the protein into the PSI complex. Required for binding of PsaD and PsaE to PSI. PSI is a plastocyanin-ferredoxin oxidoreductase, converting photonic excitation into a charge separation, which transfers an electron from the donor P700 chlorophyll pair to the spectroscopically characterized acceptors A0, A1, FX, FA and FB in turn.</text>
</comment>
<comment type="catalytic activity">
    <reaction evidence="2">
        <text>reduced [plastocyanin] + hnu + oxidized [2Fe-2S]-[ferredoxin] = oxidized [plastocyanin] + reduced [2Fe-2S]-[ferredoxin]</text>
        <dbReference type="Rhea" id="RHEA:30407"/>
        <dbReference type="Rhea" id="RHEA-COMP:10000"/>
        <dbReference type="Rhea" id="RHEA-COMP:10001"/>
        <dbReference type="Rhea" id="RHEA-COMP:10039"/>
        <dbReference type="Rhea" id="RHEA-COMP:10040"/>
        <dbReference type="ChEBI" id="CHEBI:29036"/>
        <dbReference type="ChEBI" id="CHEBI:30212"/>
        <dbReference type="ChEBI" id="CHEBI:33737"/>
        <dbReference type="ChEBI" id="CHEBI:33738"/>
        <dbReference type="ChEBI" id="CHEBI:49552"/>
        <dbReference type="EC" id="1.97.1.12"/>
    </reaction>
</comment>
<comment type="cofactor">
    <cofactor evidence="2">
        <name>[4Fe-4S] cluster</name>
        <dbReference type="ChEBI" id="CHEBI:49883"/>
    </cofactor>
    <text evidence="2">Binds 2 [4Fe-4S] clusters. Cluster 2 is most probably the spectroscopically characterized electron acceptor FA and cluster 1 is most probably FB.</text>
</comment>
<comment type="subunit">
    <text evidence="2">The eukaryotic PSI reaction center is composed of at least 11 subunits.</text>
</comment>
<comment type="subcellular location">
    <subcellularLocation>
        <location evidence="2">Plastid</location>
        <location evidence="2">Chloroplast thylakoid membrane</location>
        <topology evidence="2">Peripheral membrane protein</topology>
        <orientation evidence="2">Stromal side</orientation>
    </subcellularLocation>
</comment>
<evidence type="ECO:0000250" key="1"/>
<evidence type="ECO:0000255" key="2">
    <source>
        <dbReference type="HAMAP-Rule" id="MF_01303"/>
    </source>
</evidence>
<reference key="1">
    <citation type="journal article" date="2007" name="BMC Biol.">
        <title>A clade uniting the green algae Mesostigma viride and Chlorokybus atmophyticus represents the deepest branch of the Streptophyta in chloroplast genome-based phylogenies.</title>
        <authorList>
            <person name="Lemieux C."/>
            <person name="Otis C."/>
            <person name="Turmel M."/>
        </authorList>
    </citation>
    <scope>NUCLEOTIDE SEQUENCE [LARGE SCALE GENOMIC DNA]</scope>
    <source>
        <strain>SAG 48.80</strain>
    </source>
</reference>
<proteinExistence type="inferred from homology"/>